<dbReference type="EMBL" id="AP004638">
    <property type="protein sequence ID" value="BAB84203.1"/>
    <property type="molecule type" value="Genomic_DNA"/>
</dbReference>
<dbReference type="RefSeq" id="NP_569616.1">
    <property type="nucleotide sequence ID" value="NC_003386.1"/>
</dbReference>
<dbReference type="SMR" id="Q7HJJ2"/>
<dbReference type="GeneID" id="2545108"/>
<dbReference type="GO" id="GO:0009535">
    <property type="term" value="C:chloroplast thylakoid membrane"/>
    <property type="evidence" value="ECO:0007669"/>
    <property type="project" value="UniProtKB-SubCell"/>
</dbReference>
<dbReference type="GO" id="GO:0045259">
    <property type="term" value="C:proton-transporting ATP synthase complex"/>
    <property type="evidence" value="ECO:0007669"/>
    <property type="project" value="UniProtKB-KW"/>
</dbReference>
<dbReference type="GO" id="GO:0033177">
    <property type="term" value="C:proton-transporting two-sector ATPase complex, proton-transporting domain"/>
    <property type="evidence" value="ECO:0007669"/>
    <property type="project" value="InterPro"/>
</dbReference>
<dbReference type="GO" id="GO:0008289">
    <property type="term" value="F:lipid binding"/>
    <property type="evidence" value="ECO:0007669"/>
    <property type="project" value="UniProtKB-KW"/>
</dbReference>
<dbReference type="GO" id="GO:0046933">
    <property type="term" value="F:proton-transporting ATP synthase activity, rotational mechanism"/>
    <property type="evidence" value="ECO:0007669"/>
    <property type="project" value="UniProtKB-UniRule"/>
</dbReference>
<dbReference type="CDD" id="cd18183">
    <property type="entry name" value="ATP-synt_Fo_c_ATPH"/>
    <property type="match status" value="1"/>
</dbReference>
<dbReference type="FunFam" id="1.20.20.10:FF:000001">
    <property type="entry name" value="ATP synthase subunit c, chloroplastic"/>
    <property type="match status" value="1"/>
</dbReference>
<dbReference type="Gene3D" id="1.20.20.10">
    <property type="entry name" value="F1F0 ATP synthase subunit C"/>
    <property type="match status" value="1"/>
</dbReference>
<dbReference type="HAMAP" id="MF_01396">
    <property type="entry name" value="ATP_synth_c_bact"/>
    <property type="match status" value="1"/>
</dbReference>
<dbReference type="InterPro" id="IPR005953">
    <property type="entry name" value="ATP_synth_csu_bac/chlpt"/>
</dbReference>
<dbReference type="InterPro" id="IPR000454">
    <property type="entry name" value="ATP_synth_F0_csu"/>
</dbReference>
<dbReference type="InterPro" id="IPR020537">
    <property type="entry name" value="ATP_synth_F0_csu_DDCD_BS"/>
</dbReference>
<dbReference type="InterPro" id="IPR038662">
    <property type="entry name" value="ATP_synth_F0_csu_sf"/>
</dbReference>
<dbReference type="InterPro" id="IPR002379">
    <property type="entry name" value="ATPase_proteolipid_c-like_dom"/>
</dbReference>
<dbReference type="InterPro" id="IPR035921">
    <property type="entry name" value="F/V-ATP_Csub_sf"/>
</dbReference>
<dbReference type="NCBIfam" id="TIGR01260">
    <property type="entry name" value="ATP_synt_c"/>
    <property type="match status" value="1"/>
</dbReference>
<dbReference type="NCBIfam" id="NF005608">
    <property type="entry name" value="PRK07354.1"/>
    <property type="match status" value="1"/>
</dbReference>
<dbReference type="PANTHER" id="PTHR10031">
    <property type="entry name" value="ATP SYNTHASE LIPID-BINDING PROTEIN, MITOCHONDRIAL"/>
    <property type="match status" value="1"/>
</dbReference>
<dbReference type="PANTHER" id="PTHR10031:SF0">
    <property type="entry name" value="ATPASE PROTEIN 9"/>
    <property type="match status" value="1"/>
</dbReference>
<dbReference type="Pfam" id="PF00137">
    <property type="entry name" value="ATP-synt_C"/>
    <property type="match status" value="1"/>
</dbReference>
<dbReference type="PRINTS" id="PR00124">
    <property type="entry name" value="ATPASEC"/>
</dbReference>
<dbReference type="SUPFAM" id="SSF81333">
    <property type="entry name" value="F1F0 ATP synthase subunit C"/>
    <property type="match status" value="1"/>
</dbReference>
<dbReference type="PROSITE" id="PS00605">
    <property type="entry name" value="ATPASE_C"/>
    <property type="match status" value="1"/>
</dbReference>
<gene>
    <name evidence="1" type="primary">atpH</name>
</gene>
<keyword id="KW-0066">ATP synthesis</keyword>
<keyword id="KW-0138">CF(0)</keyword>
<keyword id="KW-0150">Chloroplast</keyword>
<keyword id="KW-0375">Hydrogen ion transport</keyword>
<keyword id="KW-0406">Ion transport</keyword>
<keyword id="KW-0446">Lipid-binding</keyword>
<keyword id="KW-0472">Membrane</keyword>
<keyword id="KW-0934">Plastid</keyword>
<keyword id="KW-0793">Thylakoid</keyword>
<keyword id="KW-0812">Transmembrane</keyword>
<keyword id="KW-1133">Transmembrane helix</keyword>
<keyword id="KW-0813">Transport</keyword>
<protein>
    <recommendedName>
        <fullName evidence="1">ATP synthase subunit c, chloroplastic</fullName>
    </recommendedName>
    <alternativeName>
        <fullName evidence="1">ATP synthase F(0) sector subunit c</fullName>
    </alternativeName>
    <alternativeName>
        <fullName evidence="1">ATPase subunit III</fullName>
    </alternativeName>
    <alternativeName>
        <fullName evidence="1">F-type ATPase subunit c</fullName>
        <shortName evidence="1">F-ATPase subunit c</shortName>
    </alternativeName>
    <alternativeName>
        <fullName evidence="1">Lipid-binding protein</fullName>
    </alternativeName>
</protein>
<name>ATPH_PSINU</name>
<geneLocation type="chloroplast"/>
<organism>
    <name type="scientific">Psilotum nudum</name>
    <name type="common">Whisk fern</name>
    <name type="synonym">Lycopodium nudum</name>
    <dbReference type="NCBI Taxonomy" id="3240"/>
    <lineage>
        <taxon>Eukaryota</taxon>
        <taxon>Viridiplantae</taxon>
        <taxon>Streptophyta</taxon>
        <taxon>Embryophyta</taxon>
        <taxon>Tracheophyta</taxon>
        <taxon>Polypodiopsida</taxon>
        <taxon>Ophioglossidae</taxon>
        <taxon>Psilotales</taxon>
        <taxon>Psilotaceae</taxon>
        <taxon>Psilotum</taxon>
    </lineage>
</organism>
<feature type="chain" id="PRO_0000362959" description="ATP synthase subunit c, chloroplastic">
    <location>
        <begin position="1"/>
        <end position="81"/>
    </location>
</feature>
<feature type="transmembrane region" description="Helical" evidence="1">
    <location>
        <begin position="3"/>
        <end position="23"/>
    </location>
</feature>
<feature type="transmembrane region" description="Helical" evidence="1">
    <location>
        <begin position="57"/>
        <end position="77"/>
    </location>
</feature>
<feature type="site" description="Reversibly protonated during proton transport" evidence="1">
    <location>
        <position position="61"/>
    </location>
</feature>
<reference key="1">
    <citation type="journal article" date="2004" name="Mol. Biol. Evol.">
        <title>Chloroplast phylogeny indicates that bryophytes are monophyletic.</title>
        <authorList>
            <person name="Nishiyama T."/>
            <person name="Wolf P.G."/>
            <person name="Kugita M."/>
            <person name="Sinclair R.B."/>
            <person name="Sugita M."/>
            <person name="Sugiura C."/>
            <person name="Wakasugi T."/>
            <person name="Yamada K."/>
            <person name="Yoshinaga K."/>
            <person name="Yamaguchi K."/>
            <person name="Ueda K."/>
            <person name="Hasebe M."/>
        </authorList>
    </citation>
    <scope>NUCLEOTIDE SEQUENCE [LARGE SCALE GENOMIC DNA]</scope>
    <source>
        <strain>Kingyoku</strain>
    </source>
</reference>
<comment type="function">
    <text evidence="1">F(1)F(0) ATP synthase produces ATP from ADP in the presence of a proton or sodium gradient. F-type ATPases consist of two structural domains, F(1) containing the extramembraneous catalytic core and F(0) containing the membrane proton channel, linked together by a central stalk and a peripheral stalk. During catalysis, ATP synthesis in the catalytic domain of F(1) is coupled via a rotary mechanism of the central stalk subunits to proton translocation.</text>
</comment>
<comment type="function">
    <text evidence="1">Key component of the F(0) channel; it plays a direct role in translocation across the membrane. A homomeric c-ring of between 10-14 subunits forms the central stalk rotor element with the F(1) delta and epsilon subunits.</text>
</comment>
<comment type="subunit">
    <text evidence="1">F-type ATPases have 2 components, F(1) - the catalytic core - and F(0) - the membrane proton channel. F(1) has five subunits: alpha(3), beta(3), gamma(1), delta(1), epsilon(1). F(0) has four main subunits: a(1), b(1), b'(1) and c(10-14). The alpha and beta chains form an alternating ring which encloses part of the gamma chain. F(1) is attached to F(0) by a central stalk formed by the gamma and epsilon chains, while a peripheral stalk is formed by the delta, b and b' chains.</text>
</comment>
<comment type="subcellular location">
    <subcellularLocation>
        <location evidence="1">Plastid</location>
        <location evidence="1">Chloroplast thylakoid membrane</location>
        <topology evidence="1">Multi-pass membrane protein</topology>
    </subcellularLocation>
</comment>
<comment type="miscellaneous">
    <text>In plastids the F-type ATPase is also known as CF(1)CF(0).</text>
</comment>
<comment type="similarity">
    <text evidence="1">Belongs to the ATPase C chain family.</text>
</comment>
<accession>Q7HJJ2</accession>
<evidence type="ECO:0000255" key="1">
    <source>
        <dbReference type="HAMAP-Rule" id="MF_01396"/>
    </source>
</evidence>
<proteinExistence type="inferred from homology"/>
<sequence length="81" mass="7990">MNPLISAASVIAAGLAVGLASIGPGVGQGTAAGQAVEGIARQPEAEGKIRGTLLLSLAFMEALTIYGLVVALALLFANPFV</sequence>